<keyword id="KW-0002">3D-structure</keyword>
<keyword id="KW-0119">Carbohydrate metabolism</keyword>
<keyword id="KW-0325">Glycoprotein</keyword>
<keyword id="KW-0326">Glycosidase</keyword>
<keyword id="KW-0378">Hydrolase</keyword>
<keyword id="KW-1185">Reference proteome</keyword>
<keyword id="KW-0732">Signal</keyword>
<name>SIA_ASPFU</name>
<comment type="function">
    <text evidence="2 3">Sialidase is able to release sialic acid from a wide variety of natural substrates including bovine salivary mucin, colominic acid, bovine fetuin, a serum glycoprotein containing both alpha-2-6 and alpha-2-3-linkages in a ratio of about 3:2, and glycoproteins and glycolipids from thermally denatured human lung epithelial cells. Does not show any trans-sialidase activity since it is able to remove terminal sialic acid residues but is unable to catalyze their transfer to the acceptor substrate. 2-keto-3-deoxynononic acid (KDN) is the preferred substrate and A.fumigatus can utilize KDN as a sole carbon source.</text>
</comment>
<comment type="catalytic activity">
    <reaction evidence="2 3">
        <text>Hydrolysis of alpha-(2-&gt;3)-, alpha-(2-&gt;6)-, alpha-(2-&gt;8)- glycosidic linkages of terminal sialic acid residues in oligosaccharides, glycoproteins, glycolipids, colominic acid and synthetic substrates.</text>
        <dbReference type="EC" id="3.2.1.18"/>
    </reaction>
</comment>
<comment type="biophysicochemical properties">
    <kinetics>
        <KM evidence="2">3.3 mM for 4-methylumbelliferyl alpha-D-N-acetylneuraminic acid (MUN)</KM>
        <KM evidence="2">3.1 mM for 4-methylumbelliferyl-alpha-D-N-acetylneuraminylgalactopyranoside</KM>
        <KM evidence="3">0.23 mM for 4-methylumbelliferyl 3-deoxy-D-glycero-alpha-D-galacto-non-2-ulopyranosonic acid (KDN-MU)</KM>
    </kinetics>
    <phDependence>
        <text evidence="2 3">Optimum pH is 3.5.</text>
    </phDependence>
</comment>
<comment type="induction">
    <text evidence="2">Expression is increased during conidial swelling and germination in presence of human serum.</text>
</comment>
<comment type="similarity">
    <text evidence="4">Belongs to the glycosyl hydrolase 33 family.</text>
</comment>
<evidence type="ECO:0000255" key="1"/>
<evidence type="ECO:0000269" key="2">
    <source>
    </source>
</evidence>
<evidence type="ECO:0000269" key="3">
    <source>
    </source>
</evidence>
<evidence type="ECO:0000305" key="4"/>
<evidence type="ECO:0007829" key="5">
    <source>
        <dbReference type="PDB" id="2XZI"/>
    </source>
</evidence>
<proteinExistence type="evidence at protein level"/>
<feature type="signal peptide" evidence="1">
    <location>
        <begin position="1"/>
        <end position="20"/>
    </location>
</feature>
<feature type="chain" id="PRO_0000429425" description="Exo-alpha-sialidase">
    <location>
        <begin position="21"/>
        <end position="406"/>
    </location>
</feature>
<feature type="binding site" evidence="3">
    <location>
        <position position="59"/>
    </location>
    <ligand>
        <name>substrate</name>
    </ligand>
</feature>
<feature type="binding site" evidence="3">
    <location>
        <position position="78"/>
    </location>
    <ligand>
        <name>substrate</name>
    </ligand>
</feature>
<feature type="binding site" evidence="3">
    <location>
        <position position="84"/>
    </location>
    <ligand>
        <name>substrate</name>
    </ligand>
</feature>
<feature type="binding site" evidence="3">
    <location>
        <position position="148"/>
    </location>
    <ligand>
        <name>substrate</name>
    </ligand>
</feature>
<feature type="binding site" evidence="3">
    <location>
        <position position="265"/>
    </location>
    <ligand>
        <name>substrate</name>
    </ligand>
</feature>
<feature type="binding site">
    <location>
        <begin position="322"/>
        <end position="323"/>
    </location>
    <ligand>
        <name>substrate</name>
    </ligand>
</feature>
<feature type="binding site" evidence="3">
    <location>
        <position position="322"/>
    </location>
    <ligand>
        <name>substrate</name>
    </ligand>
</feature>
<feature type="binding site">
    <location>
        <begin position="331"/>
        <end position="332"/>
    </location>
    <ligand>
        <name>substrate</name>
    </ligand>
</feature>
<feature type="binding site" evidence="3">
    <location>
        <position position="337"/>
    </location>
    <ligand>
        <name>substrate</name>
    </ligand>
</feature>
<feature type="binding site" evidence="3">
    <location>
        <position position="358"/>
    </location>
    <ligand>
        <name>substrate</name>
    </ligand>
</feature>
<feature type="binding site">
    <location>
        <begin position="376"/>
        <end position="378"/>
    </location>
    <ligand>
        <name>substrate</name>
    </ligand>
</feature>
<feature type="binding site" evidence="3">
    <location>
        <position position="376"/>
    </location>
    <ligand>
        <name>substrate</name>
    </ligand>
</feature>
<feature type="glycosylation site" description="N-linked (GlcNAc...) asparagine" evidence="1">
    <location>
        <position position="235"/>
    </location>
</feature>
<feature type="glycosylation site" description="N-linked (GlcNAc...) asparagine" evidence="1">
    <location>
        <position position="396"/>
    </location>
</feature>
<feature type="helix" evidence="5">
    <location>
        <begin position="24"/>
        <end position="27"/>
    </location>
</feature>
<feature type="strand" evidence="5">
    <location>
        <begin position="32"/>
        <end position="38"/>
    </location>
</feature>
<feature type="strand" evidence="5">
    <location>
        <begin position="43"/>
        <end position="45"/>
    </location>
</feature>
<feature type="strand" evidence="5">
    <location>
        <begin position="56"/>
        <end position="65"/>
    </location>
</feature>
<feature type="strand" evidence="5">
    <location>
        <begin position="71"/>
        <end position="82"/>
    </location>
</feature>
<feature type="strand" evidence="5">
    <location>
        <begin position="84"/>
        <end position="100"/>
    </location>
</feature>
<feature type="helix" evidence="5">
    <location>
        <begin position="105"/>
        <end position="107"/>
    </location>
</feature>
<feature type="strand" evidence="5">
    <location>
        <begin position="112"/>
        <end position="115"/>
    </location>
</feature>
<feature type="strand" evidence="5">
    <location>
        <begin position="118"/>
        <end position="129"/>
    </location>
</feature>
<feature type="strand" evidence="5">
    <location>
        <begin position="135"/>
        <end position="142"/>
    </location>
</feature>
<feature type="strand" evidence="5">
    <location>
        <begin position="146"/>
        <end position="150"/>
    </location>
</feature>
<feature type="turn" evidence="5">
    <location>
        <begin position="167"/>
        <end position="169"/>
    </location>
</feature>
<feature type="strand" evidence="5">
    <location>
        <begin position="172"/>
        <end position="180"/>
    </location>
</feature>
<feature type="helix" evidence="5">
    <location>
        <begin position="192"/>
        <end position="195"/>
    </location>
</feature>
<feature type="strand" evidence="5">
    <location>
        <begin position="218"/>
        <end position="222"/>
    </location>
</feature>
<feature type="strand" evidence="5">
    <location>
        <begin position="225"/>
        <end position="232"/>
    </location>
</feature>
<feature type="strand" evidence="5">
    <location>
        <begin position="237"/>
        <end position="242"/>
    </location>
</feature>
<feature type="strand" evidence="5">
    <location>
        <begin position="248"/>
        <end position="254"/>
    </location>
</feature>
<feature type="strand" evidence="5">
    <location>
        <begin position="260"/>
        <end position="264"/>
    </location>
</feature>
<feature type="strand" evidence="5">
    <location>
        <begin position="267"/>
        <end position="278"/>
    </location>
</feature>
<feature type="strand" evidence="5">
    <location>
        <begin position="286"/>
        <end position="293"/>
    </location>
</feature>
<feature type="strand" evidence="5">
    <location>
        <begin position="299"/>
        <end position="308"/>
    </location>
</feature>
<feature type="strand" evidence="5">
    <location>
        <begin position="310"/>
        <end position="316"/>
    </location>
</feature>
<feature type="strand" evidence="5">
    <location>
        <begin position="318"/>
        <end position="320"/>
    </location>
</feature>
<feature type="strand" evidence="5">
    <location>
        <begin position="325"/>
        <end position="330"/>
    </location>
</feature>
<feature type="helix" evidence="5">
    <location>
        <begin position="344"/>
        <end position="347"/>
    </location>
</feature>
<feature type="strand" evidence="5">
    <location>
        <begin position="350"/>
        <end position="352"/>
    </location>
</feature>
<feature type="strand" evidence="5">
    <location>
        <begin position="354"/>
        <end position="363"/>
    </location>
</feature>
<feature type="strand" evidence="5">
    <location>
        <begin position="369"/>
        <end position="376"/>
    </location>
</feature>
<feature type="turn" evidence="5">
    <location>
        <begin position="379"/>
        <end position="382"/>
    </location>
</feature>
<feature type="strand" evidence="5">
    <location>
        <begin position="388"/>
        <end position="395"/>
    </location>
</feature>
<feature type="helix" evidence="5">
    <location>
        <begin position="397"/>
        <end position="401"/>
    </location>
</feature>
<gene>
    <name type="ORF">AFUA_4G13800</name>
</gene>
<organism>
    <name type="scientific">Aspergillus fumigatus (strain ATCC MYA-4609 / CBS 101355 / FGSC A1100 / Af293)</name>
    <name type="common">Neosartorya fumigata</name>
    <dbReference type="NCBI Taxonomy" id="330879"/>
    <lineage>
        <taxon>Eukaryota</taxon>
        <taxon>Fungi</taxon>
        <taxon>Dikarya</taxon>
        <taxon>Ascomycota</taxon>
        <taxon>Pezizomycotina</taxon>
        <taxon>Eurotiomycetes</taxon>
        <taxon>Eurotiomycetidae</taxon>
        <taxon>Eurotiales</taxon>
        <taxon>Aspergillaceae</taxon>
        <taxon>Aspergillus</taxon>
        <taxon>Aspergillus subgen. Fumigati</taxon>
    </lineage>
</organism>
<sequence length="406" mass="44414">MQSMRFMILALLVQFLPAWAINDPAKSAAPYHDEFPLFRSANMASPDKLSTGIGFHSFRIPAVVRTTTGRILAFAEGRRHTNQDFGDINLVYKRTKTTANNGASPSDWEPLREVVGSGAGTWGNPTPVVDDDNTIYLFLSWNGATYSQNGKDVLPDGTVTKKIDSTWEGRRHLYLTESRDDGNTWSKPVDLTKELTPDGWAWDAVGPGNGIRLTTGELVIPAMGRNIIGRGAPGNRTWSVQRLSGAGAEGTIVQTPDGKLYRNDRPSQKGYRMVARGTLEGFGAFAPDAGLPDPACQGSVLRYNSDAPARTIFLNSASGTSRRAMRVRISYDADAKKFNYGRKLEDAKVSGAGHEGGYSSMTKTGDYKIGALVESDFFNDGTGKNSYRAIIWRRFNLSWILNGPNN</sequence>
<dbReference type="EC" id="3.2.1.18" evidence="2 3"/>
<dbReference type="EMBL" id="AAHF01000005">
    <property type="protein sequence ID" value="EAL89414.2"/>
    <property type="molecule type" value="Genomic_DNA"/>
</dbReference>
<dbReference type="RefSeq" id="XP_751452.2">
    <property type="nucleotide sequence ID" value="XM_746359.2"/>
</dbReference>
<dbReference type="PDB" id="2XCY">
    <property type="method" value="X-ray"/>
    <property type="resolution" value="1.84 A"/>
    <property type="chains" value="A/B=21-406"/>
</dbReference>
<dbReference type="PDB" id="2XZI">
    <property type="method" value="X-ray"/>
    <property type="resolution" value="1.45 A"/>
    <property type="chains" value="A/B=21-406"/>
</dbReference>
<dbReference type="PDB" id="2XZJ">
    <property type="method" value="X-ray"/>
    <property type="resolution" value="1.84 A"/>
    <property type="chains" value="A/B=21-406"/>
</dbReference>
<dbReference type="PDB" id="2XZK">
    <property type="method" value="X-ray"/>
    <property type="resolution" value="1.50 A"/>
    <property type="chains" value="A/B=21-406"/>
</dbReference>
<dbReference type="PDB" id="4M4N">
    <property type="method" value="X-ray"/>
    <property type="resolution" value="1.84 A"/>
    <property type="chains" value="A/B=1-406"/>
</dbReference>
<dbReference type="PDB" id="4M4U">
    <property type="method" value="X-ray"/>
    <property type="resolution" value="1.84 A"/>
    <property type="chains" value="A/B=1-406"/>
</dbReference>
<dbReference type="PDB" id="4M4V">
    <property type="method" value="X-ray"/>
    <property type="resolution" value="1.84 A"/>
    <property type="chains" value="A/B=1-406"/>
</dbReference>
<dbReference type="PDBsum" id="2XCY"/>
<dbReference type="PDBsum" id="2XZI"/>
<dbReference type="PDBsum" id="2XZJ"/>
<dbReference type="PDBsum" id="2XZK"/>
<dbReference type="PDBsum" id="4M4N"/>
<dbReference type="PDBsum" id="4M4U"/>
<dbReference type="PDBsum" id="4M4V"/>
<dbReference type="SMR" id="Q4WQS0"/>
<dbReference type="STRING" id="330879.Q4WQS0"/>
<dbReference type="EnsemblFungi" id="EAL89414">
    <property type="protein sequence ID" value="EAL89414"/>
    <property type="gene ID" value="AFUA_4G13800"/>
</dbReference>
<dbReference type="GeneID" id="3509581"/>
<dbReference type="KEGG" id="afm:AFUA_4G13800"/>
<dbReference type="VEuPathDB" id="FungiDB:Afu4g13800"/>
<dbReference type="eggNOG" id="ENOG502QSIT">
    <property type="taxonomic scope" value="Eukaryota"/>
</dbReference>
<dbReference type="HOGENOM" id="CLU_024620_1_0_1"/>
<dbReference type="InParanoid" id="Q4WQS0"/>
<dbReference type="OMA" id="RTIFMNS"/>
<dbReference type="OrthoDB" id="2739686at2759"/>
<dbReference type="BRENDA" id="3.2.1.18">
    <property type="organism ID" value="508"/>
</dbReference>
<dbReference type="EvolutionaryTrace" id="Q4WQS0"/>
<dbReference type="Proteomes" id="UP000002530">
    <property type="component" value="Chromosome 4"/>
</dbReference>
<dbReference type="GO" id="GO:0005737">
    <property type="term" value="C:cytoplasm"/>
    <property type="evidence" value="ECO:0000318"/>
    <property type="project" value="GO_Central"/>
</dbReference>
<dbReference type="GO" id="GO:0043231">
    <property type="term" value="C:intracellular membrane-bounded organelle"/>
    <property type="evidence" value="ECO:0000318"/>
    <property type="project" value="GO_Central"/>
</dbReference>
<dbReference type="GO" id="GO:0016020">
    <property type="term" value="C:membrane"/>
    <property type="evidence" value="ECO:0000318"/>
    <property type="project" value="GO_Central"/>
</dbReference>
<dbReference type="GO" id="GO:0004308">
    <property type="term" value="F:exo-alpha-sialidase activity"/>
    <property type="evidence" value="ECO:0000314"/>
    <property type="project" value="AspGD"/>
</dbReference>
<dbReference type="GO" id="GO:0006689">
    <property type="term" value="P:ganglioside catabolic process"/>
    <property type="evidence" value="ECO:0000318"/>
    <property type="project" value="GO_Central"/>
</dbReference>
<dbReference type="GO" id="GO:0009313">
    <property type="term" value="P:oligosaccharide catabolic process"/>
    <property type="evidence" value="ECO:0000318"/>
    <property type="project" value="GO_Central"/>
</dbReference>
<dbReference type="CDD" id="cd00260">
    <property type="entry name" value="Sialidase"/>
    <property type="match status" value="1"/>
</dbReference>
<dbReference type="FunFam" id="2.120.10.10:FF:000008">
    <property type="entry name" value="Exo-alpha-sialidase"/>
    <property type="match status" value="1"/>
</dbReference>
<dbReference type="Gene3D" id="2.120.10.10">
    <property type="match status" value="1"/>
</dbReference>
<dbReference type="InterPro" id="IPR011040">
    <property type="entry name" value="Sialidase"/>
</dbReference>
<dbReference type="InterPro" id="IPR026856">
    <property type="entry name" value="Sialidase_fam"/>
</dbReference>
<dbReference type="InterPro" id="IPR036278">
    <property type="entry name" value="Sialidase_sf"/>
</dbReference>
<dbReference type="PANTHER" id="PTHR10628:SF30">
    <property type="entry name" value="EXO-ALPHA-SIALIDASE"/>
    <property type="match status" value="1"/>
</dbReference>
<dbReference type="PANTHER" id="PTHR10628">
    <property type="entry name" value="SIALIDASE"/>
    <property type="match status" value="1"/>
</dbReference>
<dbReference type="Pfam" id="PF13088">
    <property type="entry name" value="BNR_2"/>
    <property type="match status" value="1"/>
</dbReference>
<dbReference type="SUPFAM" id="SSF50939">
    <property type="entry name" value="Sialidases"/>
    <property type="match status" value="1"/>
</dbReference>
<protein>
    <recommendedName>
        <fullName>Exo-alpha-sialidase</fullName>
        <ecNumber evidence="2 3">3.2.1.18</ecNumber>
    </recommendedName>
    <alternativeName>
        <fullName>Alpha-neuraminidase</fullName>
    </alternativeName>
    <alternativeName>
        <fullName>N-acylneuraminate glycohydrolase</fullName>
    </alternativeName>
</protein>
<accession>Q4WQS0</accession>
<reference key="1">
    <citation type="journal article" date="2005" name="Nature">
        <title>Genomic sequence of the pathogenic and allergenic filamentous fungus Aspergillus fumigatus.</title>
        <authorList>
            <person name="Nierman W.C."/>
            <person name="Pain A."/>
            <person name="Anderson M.J."/>
            <person name="Wortman J.R."/>
            <person name="Kim H.S."/>
            <person name="Arroyo J."/>
            <person name="Berriman M."/>
            <person name="Abe K."/>
            <person name="Archer D.B."/>
            <person name="Bermejo C."/>
            <person name="Bennett J.W."/>
            <person name="Bowyer P."/>
            <person name="Chen D."/>
            <person name="Collins M."/>
            <person name="Coulsen R."/>
            <person name="Davies R."/>
            <person name="Dyer P.S."/>
            <person name="Farman M.L."/>
            <person name="Fedorova N."/>
            <person name="Fedorova N.D."/>
            <person name="Feldblyum T.V."/>
            <person name="Fischer R."/>
            <person name="Fosker N."/>
            <person name="Fraser A."/>
            <person name="Garcia J.L."/>
            <person name="Garcia M.J."/>
            <person name="Goble A."/>
            <person name="Goldman G.H."/>
            <person name="Gomi K."/>
            <person name="Griffith-Jones S."/>
            <person name="Gwilliam R."/>
            <person name="Haas B.J."/>
            <person name="Haas H."/>
            <person name="Harris D.E."/>
            <person name="Horiuchi H."/>
            <person name="Huang J."/>
            <person name="Humphray S."/>
            <person name="Jimenez J."/>
            <person name="Keller N."/>
            <person name="Khouri H."/>
            <person name="Kitamoto K."/>
            <person name="Kobayashi T."/>
            <person name="Konzack S."/>
            <person name="Kulkarni R."/>
            <person name="Kumagai T."/>
            <person name="Lafton A."/>
            <person name="Latge J.-P."/>
            <person name="Li W."/>
            <person name="Lord A."/>
            <person name="Lu C."/>
            <person name="Majoros W.H."/>
            <person name="May G.S."/>
            <person name="Miller B.L."/>
            <person name="Mohamoud Y."/>
            <person name="Molina M."/>
            <person name="Monod M."/>
            <person name="Mouyna I."/>
            <person name="Mulligan S."/>
            <person name="Murphy L.D."/>
            <person name="O'Neil S."/>
            <person name="Paulsen I."/>
            <person name="Penalva M.A."/>
            <person name="Pertea M."/>
            <person name="Price C."/>
            <person name="Pritchard B.L."/>
            <person name="Quail M.A."/>
            <person name="Rabbinowitsch E."/>
            <person name="Rawlins N."/>
            <person name="Rajandream M.A."/>
            <person name="Reichard U."/>
            <person name="Renauld H."/>
            <person name="Robson G.D."/>
            <person name="Rodriguez de Cordoba S."/>
            <person name="Rodriguez-Pena J.M."/>
            <person name="Ronning C.M."/>
            <person name="Rutter S."/>
            <person name="Salzberg S.L."/>
            <person name="Sanchez M."/>
            <person name="Sanchez-Ferrero J.C."/>
            <person name="Saunders D."/>
            <person name="Seeger K."/>
            <person name="Squares R."/>
            <person name="Squares S."/>
            <person name="Takeuchi M."/>
            <person name="Tekaia F."/>
            <person name="Turner G."/>
            <person name="Vazquez de Aldana C.R."/>
            <person name="Weidman J."/>
            <person name="White O."/>
            <person name="Woodward J.R."/>
            <person name="Yu J.-H."/>
            <person name="Fraser C.M."/>
            <person name="Galagan J.E."/>
            <person name="Asai K."/>
            <person name="Machida M."/>
            <person name="Hall N."/>
            <person name="Barrell B.G."/>
            <person name="Denning D.W."/>
        </authorList>
    </citation>
    <scope>NUCLEOTIDE SEQUENCE [LARGE SCALE GENOMIC DNA]</scope>
    <source>
        <strain>ATCC MYA-4609 / CBS 101355 / FGSC A1100 / Af293</strain>
    </source>
</reference>
<reference key="2">
    <citation type="journal article" date="2010" name="Glycoconj. J.">
        <title>Cloning and characterization of a sialidase from the filamentous fungus, Aspergillus fumigatus.</title>
        <authorList>
            <person name="Warwas M.L."/>
            <person name="Yeung J.H."/>
            <person name="Indurugalla D."/>
            <person name="Mooers A.O."/>
            <person name="Bennet A.J."/>
            <person name="Moore M.M."/>
        </authorList>
    </citation>
    <scope>FUNCTION</scope>
    <scope>CATALYTIC ACTIVITY</scope>
    <scope>BIOPHYSICOCHEMICAL PROPERTIES</scope>
    <scope>INDUCTION</scope>
</reference>
<reference key="3">
    <citation type="journal article" date="2011" name="J. Biol. Chem.">
        <title>The Aspergillus fumigatus sialidase is a 3-deoxy-D-glycero-D-galacto-2-nonulosonic acid hydrolase (KDNase): structural and mechanistic insights.</title>
        <authorList>
            <person name="Telford J.C."/>
            <person name="Yeung J.H."/>
            <person name="Xu G."/>
            <person name="Kiefel M.J."/>
            <person name="Watts A.G."/>
            <person name="Hader S."/>
            <person name="Chan J."/>
            <person name="Bennet A.J."/>
            <person name="Moore M.M."/>
            <person name="Taylor G.L."/>
        </authorList>
    </citation>
    <scope>X-RAY CRYSTALLOGRAPHY (1.45 ANGSTROMS) OF 21-406 IN COMPLEX WITH SUBSTRATE</scope>
    <scope>FUNCTION</scope>
    <scope>CATALYTIC ACTIVITY</scope>
    <scope>BIOPHYSICOCHEMICAL PROPERTIES</scope>
</reference>